<keyword id="KW-0002">3D-structure</keyword>
<keyword id="KW-0106">Calcium</keyword>
<keyword id="KW-0479">Metal-binding</keyword>
<keyword id="KW-0505">Motor protein</keyword>
<keyword id="KW-0514">Muscle protein</keyword>
<keyword id="KW-0518">Myosin</keyword>
<keyword id="KW-0677">Repeat</keyword>
<protein>
    <recommendedName>
        <fullName>Myosin regulatory light chain, striated adductor muscle</fullName>
        <shortName>R-LC</shortName>
    </recommendedName>
</protein>
<organism>
    <name type="scientific">Argopecten irradians</name>
    <name type="common">Bay scallop</name>
    <name type="synonym">Aequipecten irradians</name>
    <dbReference type="NCBI Taxonomy" id="31199"/>
    <lineage>
        <taxon>Eukaryota</taxon>
        <taxon>Metazoa</taxon>
        <taxon>Spiralia</taxon>
        <taxon>Lophotrochozoa</taxon>
        <taxon>Mollusca</taxon>
        <taxon>Bivalvia</taxon>
        <taxon>Autobranchia</taxon>
        <taxon>Pteriomorphia</taxon>
        <taxon>Pectinida</taxon>
        <taxon>Pectinoidea</taxon>
        <taxon>Pectinidae</taxon>
        <taxon>Argopecten</taxon>
    </lineage>
</organism>
<comment type="function">
    <text>In molluscan muscle, calcium regulation is associated with myosin rather than with actin. Muscle myosin contains two types of light chains: the catalytic light chain, essential for ATPase activity, and the regulatory light chain, a calcium-binding protein responsible for Ca(2+) dependent binding and Ca(2+) dependent Mg-ATPase activity.</text>
</comment>
<comment type="miscellaneous">
    <text>This chain binds calcium.</text>
</comment>
<evidence type="ECO:0000255" key="1">
    <source>
        <dbReference type="PROSITE-ProRule" id="PRU00448"/>
    </source>
</evidence>
<evidence type="ECO:0007829" key="2">
    <source>
        <dbReference type="PDB" id="1B7T"/>
    </source>
</evidence>
<evidence type="ECO:0007829" key="3">
    <source>
        <dbReference type="PDB" id="1QVI"/>
    </source>
</evidence>
<evidence type="ECO:0007829" key="4">
    <source>
        <dbReference type="PDB" id="1WDC"/>
    </source>
</evidence>
<evidence type="ECO:0007829" key="5">
    <source>
        <dbReference type="PDB" id="3JTD"/>
    </source>
</evidence>
<evidence type="ECO:0007829" key="6">
    <source>
        <dbReference type="PDB" id="3JVT"/>
    </source>
</evidence>
<feature type="initiator methionine" description="Removed">
    <location>
        <position position="1"/>
    </location>
</feature>
<feature type="chain" id="PRO_0000198751" description="Myosin regulatory light chain, striated adductor muscle">
    <location>
        <begin position="2"/>
        <end position="157"/>
    </location>
</feature>
<feature type="domain" description="EF-hand 1" evidence="1">
    <location>
        <begin position="16"/>
        <end position="51"/>
    </location>
</feature>
<feature type="domain" description="EF-hand 2" evidence="1">
    <location>
        <begin position="85"/>
        <end position="120"/>
    </location>
</feature>
<feature type="binding site" evidence="1">
    <location>
        <position position="29"/>
    </location>
    <ligand>
        <name>Ca(2+)</name>
        <dbReference type="ChEBI" id="CHEBI:29108"/>
    </ligand>
</feature>
<feature type="binding site" evidence="1">
    <location>
        <position position="31"/>
    </location>
    <ligand>
        <name>Ca(2+)</name>
        <dbReference type="ChEBI" id="CHEBI:29108"/>
    </ligand>
</feature>
<feature type="binding site" evidence="1">
    <location>
        <position position="33"/>
    </location>
    <ligand>
        <name>Ca(2+)</name>
        <dbReference type="ChEBI" id="CHEBI:29108"/>
    </ligand>
</feature>
<feature type="binding site" evidence="1">
    <location>
        <position position="40"/>
    </location>
    <ligand>
        <name>Ca(2+)</name>
        <dbReference type="ChEBI" id="CHEBI:29108"/>
    </ligand>
</feature>
<feature type="strand" evidence="6">
    <location>
        <begin position="8"/>
        <end position="10"/>
    </location>
</feature>
<feature type="helix" evidence="4">
    <location>
        <begin position="15"/>
        <end position="28"/>
    </location>
</feature>
<feature type="strand" evidence="4">
    <location>
        <begin position="33"/>
        <end position="35"/>
    </location>
</feature>
<feature type="helix" evidence="4">
    <location>
        <begin position="38"/>
        <end position="48"/>
    </location>
</feature>
<feature type="helix" evidence="4">
    <location>
        <begin position="54"/>
        <end position="61"/>
    </location>
</feature>
<feature type="strand" evidence="4">
    <location>
        <begin position="64"/>
        <end position="66"/>
    </location>
</feature>
<feature type="helix" evidence="4">
    <location>
        <begin position="70"/>
        <end position="80"/>
    </location>
</feature>
<feature type="turn" evidence="5">
    <location>
        <begin position="81"/>
        <end position="83"/>
    </location>
</feature>
<feature type="helix" evidence="4">
    <location>
        <begin position="87"/>
        <end position="95"/>
    </location>
</feature>
<feature type="strand" evidence="3">
    <location>
        <begin position="103"/>
        <end position="106"/>
    </location>
</feature>
<feature type="helix" evidence="4">
    <location>
        <begin position="107"/>
        <end position="116"/>
    </location>
</feature>
<feature type="strand" evidence="4">
    <location>
        <begin position="117"/>
        <end position="119"/>
    </location>
</feature>
<feature type="helix" evidence="4">
    <location>
        <begin position="123"/>
        <end position="132"/>
    </location>
</feature>
<feature type="strand" evidence="2">
    <location>
        <begin position="137"/>
        <end position="140"/>
    </location>
</feature>
<feature type="helix" evidence="4">
    <location>
        <begin position="142"/>
        <end position="150"/>
    </location>
</feature>
<feature type="strand" evidence="6">
    <location>
        <begin position="152"/>
        <end position="155"/>
    </location>
</feature>
<reference key="1">
    <citation type="journal article" date="1987" name="J. Biol. Chem.">
        <title>Cloning and characterization of the scallop essential and regulatory myosin light chain cDNAs.</title>
        <authorList>
            <person name="Goodwin E.B."/>
            <person name="Szent-Gyorgyi A.G."/>
            <person name="Leinwand L.A."/>
        </authorList>
    </citation>
    <scope>NUCLEOTIDE SEQUENCE [MRNA]</scope>
</reference>
<reference key="2">
    <citation type="journal article" date="1990" name="J. Mol. Biol.">
        <title>Regulation of scallop myosin by mutant regulatory light chains.</title>
        <authorList>
            <person name="Goodwin E.B."/>
            <person name="Leinwand L.A."/>
            <person name="Szent-Gyorgyi A.G."/>
        </authorList>
    </citation>
    <scope>SEQUENCE REVISION</scope>
    <scope>MUTAGENESIS</scope>
</reference>
<reference key="3">
    <citation type="journal article" date="1994" name="Nature">
        <title>Structure of the regulatory domain of scallop myosin at 2.8-A resolution.</title>
        <authorList>
            <person name="Xie X."/>
            <person name="Harrison D.H."/>
            <person name="Schlichting I."/>
            <person name="Sweet R.M."/>
            <person name="Kalabokis V.N."/>
            <person name="Szent-Gyorgyi A.G."/>
            <person name="Cohen C."/>
        </authorList>
    </citation>
    <scope>X-RAY CRYSTALLOGRAPHY (2.8 ANGSTROMS)</scope>
</reference>
<reference key="4">
    <citation type="journal article" date="1996" name="Structure">
        <title>Structure of the regulatory domain of scallop myosin at 2-A resolution: implications for regulation.</title>
        <authorList>
            <person name="Houdusse A."/>
            <person name="Cohen C."/>
        </authorList>
    </citation>
    <scope>X-RAY CRYSTALLOGRAPHY (2.0 ANGSTROMS)</scope>
</reference>
<sequence length="157" mass="17671">MADKAASGVLTKLPQKQIQEMKEAFSMIDVDRDGFVSKEDIKAISEQLGRAPDDKELTAMLKEAPGPLNFTMFLSIFSDKLSGTDSEETIRNAFAMFDEQETKKLNIEYIKDLLENMGDNFNKDEMRMTFKEAPVEGGKFDYVKFTAMIKGSGEEEA</sequence>
<dbReference type="EMBL" id="M17208">
    <property type="protein sequence ID" value="AAA27715.1"/>
    <property type="status" value="ALT_SEQ"/>
    <property type="molecule type" value="mRNA"/>
</dbReference>
<dbReference type="PIR" id="B29786">
    <property type="entry name" value="B29786"/>
</dbReference>
<dbReference type="RefSeq" id="XP_069140490.1">
    <property type="nucleotide sequence ID" value="XM_069284389.1"/>
</dbReference>
<dbReference type="RefSeq" id="XP_069140491.1">
    <property type="nucleotide sequence ID" value="XM_069284390.1"/>
</dbReference>
<dbReference type="PDB" id="1B7T">
    <property type="method" value="X-ray"/>
    <property type="resolution" value="2.50 A"/>
    <property type="chains" value="Y=2-157"/>
</dbReference>
<dbReference type="PDB" id="1DFK">
    <property type="method" value="X-ray"/>
    <property type="resolution" value="4.20 A"/>
    <property type="chains" value="Y=13-151"/>
</dbReference>
<dbReference type="PDB" id="1DFL">
    <property type="method" value="X-ray"/>
    <property type="resolution" value="4.20 A"/>
    <property type="chains" value="W/Y=13-151"/>
</dbReference>
<dbReference type="PDB" id="1KK7">
    <property type="method" value="X-ray"/>
    <property type="resolution" value="3.20 A"/>
    <property type="chains" value="Y=2-157"/>
</dbReference>
<dbReference type="PDB" id="1KK8">
    <property type="method" value="X-ray"/>
    <property type="resolution" value="2.30 A"/>
    <property type="chains" value="B=14-152"/>
</dbReference>
<dbReference type="PDB" id="1KQM">
    <property type="method" value="X-ray"/>
    <property type="resolution" value="3.00 A"/>
    <property type="chains" value="B=2-157"/>
</dbReference>
<dbReference type="PDB" id="1KWO">
    <property type="method" value="X-ray"/>
    <property type="resolution" value="3.80 A"/>
    <property type="chains" value="B=2-157"/>
</dbReference>
<dbReference type="PDB" id="1L2O">
    <property type="method" value="X-ray"/>
    <property type="resolution" value="2.80 A"/>
    <property type="chains" value="B=2-157"/>
</dbReference>
<dbReference type="PDB" id="1QVI">
    <property type="method" value="X-ray"/>
    <property type="resolution" value="2.54 A"/>
    <property type="chains" value="Y=2-157"/>
</dbReference>
<dbReference type="PDB" id="1S5G">
    <property type="method" value="X-ray"/>
    <property type="resolution" value="3.10 A"/>
    <property type="chains" value="Y=2-157"/>
</dbReference>
<dbReference type="PDB" id="1SCM">
    <property type="method" value="X-ray"/>
    <property type="resolution" value="2.80 A"/>
    <property type="chains" value="B=13-157"/>
</dbReference>
<dbReference type="PDB" id="1SR6">
    <property type="method" value="X-ray"/>
    <property type="resolution" value="2.75 A"/>
    <property type="chains" value="B=2-157"/>
</dbReference>
<dbReference type="PDB" id="1WDC">
    <property type="method" value="X-ray"/>
    <property type="resolution" value="2.00 A"/>
    <property type="chains" value="B=2-157"/>
</dbReference>
<dbReference type="PDB" id="2W4T">
    <property type="method" value="EM"/>
    <property type="resolution" value="35.00 A"/>
    <property type="chains" value="Y=16-151"/>
</dbReference>
<dbReference type="PDB" id="2W4V">
    <property type="method" value="EM"/>
    <property type="resolution" value="35.00 A"/>
    <property type="chains" value="Y=16-151"/>
</dbReference>
<dbReference type="PDB" id="2W4W">
    <property type="method" value="EM"/>
    <property type="resolution" value="35.00 A"/>
    <property type="chains" value="Y=16-151"/>
</dbReference>
<dbReference type="PDB" id="3JTD">
    <property type="method" value="X-ray"/>
    <property type="resolution" value="2.57 A"/>
    <property type="chains" value="B=2-157"/>
</dbReference>
<dbReference type="PDB" id="3JVT">
    <property type="method" value="X-ray"/>
    <property type="resolution" value="2.10 A"/>
    <property type="chains" value="B=2-157"/>
</dbReference>
<dbReference type="PDBsum" id="1B7T"/>
<dbReference type="PDBsum" id="1DFK"/>
<dbReference type="PDBsum" id="1DFL"/>
<dbReference type="PDBsum" id="1KK7"/>
<dbReference type="PDBsum" id="1KK8"/>
<dbReference type="PDBsum" id="1KQM"/>
<dbReference type="PDBsum" id="1KWO"/>
<dbReference type="PDBsum" id="1L2O"/>
<dbReference type="PDBsum" id="1QVI"/>
<dbReference type="PDBsum" id="1S5G"/>
<dbReference type="PDBsum" id="1SCM"/>
<dbReference type="PDBsum" id="1SR6"/>
<dbReference type="PDBsum" id="1WDC"/>
<dbReference type="PDBsum" id="2W4T"/>
<dbReference type="PDBsum" id="2W4V"/>
<dbReference type="PDBsum" id="2W4W"/>
<dbReference type="PDBsum" id="3JTD"/>
<dbReference type="PDBsum" id="3JVT"/>
<dbReference type="SMR" id="P13543"/>
<dbReference type="GeneID" id="138335346"/>
<dbReference type="EvolutionaryTrace" id="P13543"/>
<dbReference type="GO" id="GO:0016459">
    <property type="term" value="C:myosin complex"/>
    <property type="evidence" value="ECO:0007669"/>
    <property type="project" value="UniProtKB-KW"/>
</dbReference>
<dbReference type="GO" id="GO:0005509">
    <property type="term" value="F:calcium ion binding"/>
    <property type="evidence" value="ECO:0007669"/>
    <property type="project" value="InterPro"/>
</dbReference>
<dbReference type="FunFam" id="1.10.238.10:FF:000007">
    <property type="entry name" value="Putative myosin regulatory light chain sqh"/>
    <property type="match status" value="1"/>
</dbReference>
<dbReference type="Gene3D" id="1.10.238.10">
    <property type="entry name" value="EF-hand"/>
    <property type="match status" value="2"/>
</dbReference>
<dbReference type="InterPro" id="IPR011992">
    <property type="entry name" value="EF-hand-dom_pair"/>
</dbReference>
<dbReference type="InterPro" id="IPR018247">
    <property type="entry name" value="EF_Hand_1_Ca_BS"/>
</dbReference>
<dbReference type="InterPro" id="IPR002048">
    <property type="entry name" value="EF_hand_dom"/>
</dbReference>
<dbReference type="InterPro" id="IPR050403">
    <property type="entry name" value="Myosin_RLC"/>
</dbReference>
<dbReference type="PANTHER" id="PTHR23049">
    <property type="entry name" value="MYOSIN REGULATORY LIGHT CHAIN 2"/>
    <property type="match status" value="1"/>
</dbReference>
<dbReference type="Pfam" id="PF13499">
    <property type="entry name" value="EF-hand_7"/>
    <property type="match status" value="1"/>
</dbReference>
<dbReference type="SMART" id="SM00054">
    <property type="entry name" value="EFh"/>
    <property type="match status" value="2"/>
</dbReference>
<dbReference type="SUPFAM" id="SSF47473">
    <property type="entry name" value="EF-hand"/>
    <property type="match status" value="1"/>
</dbReference>
<dbReference type="PROSITE" id="PS00018">
    <property type="entry name" value="EF_HAND_1"/>
    <property type="match status" value="1"/>
</dbReference>
<dbReference type="PROSITE" id="PS50222">
    <property type="entry name" value="EF_HAND_2"/>
    <property type="match status" value="2"/>
</dbReference>
<proteinExistence type="evidence at protein level"/>
<accession>P13543</accession>
<name>MLR_ARGIR</name>